<evidence type="ECO:0000255" key="1">
    <source>
        <dbReference type="HAMAP-Rule" id="MF_00456"/>
    </source>
</evidence>
<accession>B5ZUE4</accession>
<reference key="1">
    <citation type="journal article" date="2010" name="Stand. Genomic Sci.">
        <title>Complete genome sequence of Rhizobium leguminosarum bv trifolii strain WSM2304, an effective microsymbiont of the South American clover Trifolium polymorphum.</title>
        <authorList>
            <person name="Reeve W."/>
            <person name="O'Hara G."/>
            <person name="Chain P."/>
            <person name="Ardley J."/>
            <person name="Brau L."/>
            <person name="Nandesena K."/>
            <person name="Tiwari R."/>
            <person name="Malfatti S."/>
            <person name="Kiss H."/>
            <person name="Lapidus A."/>
            <person name="Copeland A."/>
            <person name="Nolan M."/>
            <person name="Land M."/>
            <person name="Ivanova N."/>
            <person name="Mavromatis K."/>
            <person name="Markowitz V."/>
            <person name="Kyrpides N."/>
            <person name="Melino V."/>
            <person name="Denton M."/>
            <person name="Yates R."/>
            <person name="Howieson J."/>
        </authorList>
    </citation>
    <scope>NUCLEOTIDE SEQUENCE [LARGE SCALE GENOMIC DNA]</scope>
    <source>
        <strain>WSM2304</strain>
    </source>
</reference>
<sequence>MTSRKPLGRYRRIVIKIGSALLVDRKAGLKKAWLDAMCADISGLKAKGIDVLVVSSGAIALGRSVLDLPSGALKLEESQAAAAVGQIALARAWSESLSRGEIVAGQILLTLGDTEERRRYLNARATINQLLKIGAVPIINENDTVATSEIRYGDNDRLAARVATMTGADLLVLLSDIDGLYTAPPHLDPNATFLETISEITPEIEAMAGGAASELSRGGMRTKIDAGKIATTSGCAMIIASGKTDSPLSAIENGARSSWFAPSGTPVTARKTWIAGQLQPAGGLHVDDGAVTALGAGKSLLPAGVRSISGLFSRGDTVAIIGPAGREIARGLVSYDAEDARRIAGRKSAEIEAILGYPGRAAMVHRDDMVMTAQIGSKSERQKKDAAHA</sequence>
<dbReference type="EC" id="2.7.2.11" evidence="1"/>
<dbReference type="EMBL" id="CP001191">
    <property type="protein sequence ID" value="ACI57137.1"/>
    <property type="molecule type" value="Genomic_DNA"/>
</dbReference>
<dbReference type="RefSeq" id="WP_012559348.1">
    <property type="nucleotide sequence ID" value="NC_011369.1"/>
</dbReference>
<dbReference type="SMR" id="B5ZUE4"/>
<dbReference type="STRING" id="395492.Rleg2_3875"/>
<dbReference type="KEGG" id="rlt:Rleg2_3875"/>
<dbReference type="eggNOG" id="COG0263">
    <property type="taxonomic scope" value="Bacteria"/>
</dbReference>
<dbReference type="HOGENOM" id="CLU_025400_2_0_5"/>
<dbReference type="UniPathway" id="UPA00098">
    <property type="reaction ID" value="UER00359"/>
</dbReference>
<dbReference type="Proteomes" id="UP000008330">
    <property type="component" value="Chromosome"/>
</dbReference>
<dbReference type="GO" id="GO:0005829">
    <property type="term" value="C:cytosol"/>
    <property type="evidence" value="ECO:0007669"/>
    <property type="project" value="TreeGrafter"/>
</dbReference>
<dbReference type="GO" id="GO:0005524">
    <property type="term" value="F:ATP binding"/>
    <property type="evidence" value="ECO:0007669"/>
    <property type="project" value="UniProtKB-KW"/>
</dbReference>
<dbReference type="GO" id="GO:0004349">
    <property type="term" value="F:glutamate 5-kinase activity"/>
    <property type="evidence" value="ECO:0007669"/>
    <property type="project" value="UniProtKB-UniRule"/>
</dbReference>
<dbReference type="GO" id="GO:0003723">
    <property type="term" value="F:RNA binding"/>
    <property type="evidence" value="ECO:0007669"/>
    <property type="project" value="InterPro"/>
</dbReference>
<dbReference type="GO" id="GO:0055129">
    <property type="term" value="P:L-proline biosynthetic process"/>
    <property type="evidence" value="ECO:0007669"/>
    <property type="project" value="UniProtKB-UniRule"/>
</dbReference>
<dbReference type="CDD" id="cd04242">
    <property type="entry name" value="AAK_G5K_ProB"/>
    <property type="match status" value="1"/>
</dbReference>
<dbReference type="CDD" id="cd21157">
    <property type="entry name" value="PUA_G5K"/>
    <property type="match status" value="1"/>
</dbReference>
<dbReference type="FunFam" id="2.30.130.10:FF:000007">
    <property type="entry name" value="Glutamate 5-kinase"/>
    <property type="match status" value="1"/>
</dbReference>
<dbReference type="FunFam" id="3.40.1160.10:FF:000018">
    <property type="entry name" value="Glutamate 5-kinase"/>
    <property type="match status" value="1"/>
</dbReference>
<dbReference type="Gene3D" id="3.40.1160.10">
    <property type="entry name" value="Acetylglutamate kinase-like"/>
    <property type="match status" value="1"/>
</dbReference>
<dbReference type="Gene3D" id="2.30.130.10">
    <property type="entry name" value="PUA domain"/>
    <property type="match status" value="1"/>
</dbReference>
<dbReference type="HAMAP" id="MF_00456">
    <property type="entry name" value="ProB"/>
    <property type="match status" value="1"/>
</dbReference>
<dbReference type="InterPro" id="IPR036393">
    <property type="entry name" value="AceGlu_kinase-like_sf"/>
</dbReference>
<dbReference type="InterPro" id="IPR001048">
    <property type="entry name" value="Asp/Glu/Uridylate_kinase"/>
</dbReference>
<dbReference type="InterPro" id="IPR041739">
    <property type="entry name" value="G5K_ProB"/>
</dbReference>
<dbReference type="InterPro" id="IPR001057">
    <property type="entry name" value="Glu/AcGlu_kinase"/>
</dbReference>
<dbReference type="InterPro" id="IPR011529">
    <property type="entry name" value="Glu_5kinase"/>
</dbReference>
<dbReference type="InterPro" id="IPR005715">
    <property type="entry name" value="Glu_5kinase/COase_Synthase"/>
</dbReference>
<dbReference type="InterPro" id="IPR019797">
    <property type="entry name" value="Glutamate_5-kinase_CS"/>
</dbReference>
<dbReference type="InterPro" id="IPR002478">
    <property type="entry name" value="PUA"/>
</dbReference>
<dbReference type="InterPro" id="IPR015947">
    <property type="entry name" value="PUA-like_sf"/>
</dbReference>
<dbReference type="InterPro" id="IPR036974">
    <property type="entry name" value="PUA_sf"/>
</dbReference>
<dbReference type="NCBIfam" id="TIGR01027">
    <property type="entry name" value="proB"/>
    <property type="match status" value="1"/>
</dbReference>
<dbReference type="PANTHER" id="PTHR43654">
    <property type="entry name" value="GLUTAMATE 5-KINASE"/>
    <property type="match status" value="1"/>
</dbReference>
<dbReference type="PANTHER" id="PTHR43654:SF1">
    <property type="entry name" value="ISOPENTENYL PHOSPHATE KINASE"/>
    <property type="match status" value="1"/>
</dbReference>
<dbReference type="Pfam" id="PF00696">
    <property type="entry name" value="AA_kinase"/>
    <property type="match status" value="1"/>
</dbReference>
<dbReference type="Pfam" id="PF01472">
    <property type="entry name" value="PUA"/>
    <property type="match status" value="1"/>
</dbReference>
<dbReference type="PIRSF" id="PIRSF000729">
    <property type="entry name" value="GK"/>
    <property type="match status" value="1"/>
</dbReference>
<dbReference type="PRINTS" id="PR00474">
    <property type="entry name" value="GLU5KINASE"/>
</dbReference>
<dbReference type="SMART" id="SM00359">
    <property type="entry name" value="PUA"/>
    <property type="match status" value="1"/>
</dbReference>
<dbReference type="SUPFAM" id="SSF53633">
    <property type="entry name" value="Carbamate kinase-like"/>
    <property type="match status" value="1"/>
</dbReference>
<dbReference type="SUPFAM" id="SSF88697">
    <property type="entry name" value="PUA domain-like"/>
    <property type="match status" value="1"/>
</dbReference>
<dbReference type="PROSITE" id="PS00902">
    <property type="entry name" value="GLUTAMATE_5_KINASE"/>
    <property type="match status" value="1"/>
</dbReference>
<dbReference type="PROSITE" id="PS50890">
    <property type="entry name" value="PUA"/>
    <property type="match status" value="1"/>
</dbReference>
<comment type="function">
    <text evidence="1">Catalyzes the transfer of a phosphate group to glutamate to form L-glutamate 5-phosphate.</text>
</comment>
<comment type="catalytic activity">
    <reaction evidence="1">
        <text>L-glutamate + ATP = L-glutamyl 5-phosphate + ADP</text>
        <dbReference type="Rhea" id="RHEA:14877"/>
        <dbReference type="ChEBI" id="CHEBI:29985"/>
        <dbReference type="ChEBI" id="CHEBI:30616"/>
        <dbReference type="ChEBI" id="CHEBI:58274"/>
        <dbReference type="ChEBI" id="CHEBI:456216"/>
        <dbReference type="EC" id="2.7.2.11"/>
    </reaction>
</comment>
<comment type="pathway">
    <text evidence="1">Amino-acid biosynthesis; L-proline biosynthesis; L-glutamate 5-semialdehyde from L-glutamate: step 1/2.</text>
</comment>
<comment type="subcellular location">
    <subcellularLocation>
        <location evidence="1">Cytoplasm</location>
    </subcellularLocation>
</comment>
<comment type="similarity">
    <text evidence="1">Belongs to the glutamate 5-kinase family.</text>
</comment>
<feature type="chain" id="PRO_1000125253" description="Glutamate 5-kinase">
    <location>
        <begin position="1"/>
        <end position="389"/>
    </location>
</feature>
<feature type="domain" description="PUA" evidence="1">
    <location>
        <begin position="281"/>
        <end position="358"/>
    </location>
</feature>
<feature type="binding site" evidence="1">
    <location>
        <position position="16"/>
    </location>
    <ligand>
        <name>ATP</name>
        <dbReference type="ChEBI" id="CHEBI:30616"/>
    </ligand>
</feature>
<feature type="binding site" evidence="1">
    <location>
        <position position="56"/>
    </location>
    <ligand>
        <name>substrate</name>
    </ligand>
</feature>
<feature type="binding site" evidence="1">
    <location>
        <position position="143"/>
    </location>
    <ligand>
        <name>substrate</name>
    </ligand>
</feature>
<feature type="binding site" evidence="1">
    <location>
        <position position="155"/>
    </location>
    <ligand>
        <name>substrate</name>
    </ligand>
</feature>
<feature type="binding site" evidence="1">
    <location>
        <begin position="175"/>
        <end position="176"/>
    </location>
    <ligand>
        <name>ATP</name>
        <dbReference type="ChEBI" id="CHEBI:30616"/>
    </ligand>
</feature>
<keyword id="KW-0028">Amino-acid biosynthesis</keyword>
<keyword id="KW-0067">ATP-binding</keyword>
<keyword id="KW-0963">Cytoplasm</keyword>
<keyword id="KW-0418">Kinase</keyword>
<keyword id="KW-0547">Nucleotide-binding</keyword>
<keyword id="KW-0641">Proline biosynthesis</keyword>
<keyword id="KW-1185">Reference proteome</keyword>
<keyword id="KW-0808">Transferase</keyword>
<protein>
    <recommendedName>
        <fullName evidence="1">Glutamate 5-kinase</fullName>
        <ecNumber evidence="1">2.7.2.11</ecNumber>
    </recommendedName>
    <alternativeName>
        <fullName evidence="1">Gamma-glutamyl kinase</fullName>
        <shortName evidence="1">GK</shortName>
    </alternativeName>
</protein>
<organism>
    <name type="scientific">Rhizobium leguminosarum bv. trifolii (strain WSM2304)</name>
    <dbReference type="NCBI Taxonomy" id="395492"/>
    <lineage>
        <taxon>Bacteria</taxon>
        <taxon>Pseudomonadati</taxon>
        <taxon>Pseudomonadota</taxon>
        <taxon>Alphaproteobacteria</taxon>
        <taxon>Hyphomicrobiales</taxon>
        <taxon>Rhizobiaceae</taxon>
        <taxon>Rhizobium/Agrobacterium group</taxon>
        <taxon>Rhizobium</taxon>
    </lineage>
</organism>
<proteinExistence type="inferred from homology"/>
<name>PROB_RHILW</name>
<gene>
    <name evidence="1" type="primary">proB</name>
    <name type="ordered locus">Rleg2_3875</name>
</gene>